<organism>
    <name type="scientific">Glaesserella parasuis serovar 5 (strain SH0165)</name>
    <name type="common">Haemophilus parasuis</name>
    <dbReference type="NCBI Taxonomy" id="557723"/>
    <lineage>
        <taxon>Bacteria</taxon>
        <taxon>Pseudomonadati</taxon>
        <taxon>Pseudomonadota</taxon>
        <taxon>Gammaproteobacteria</taxon>
        <taxon>Pasteurellales</taxon>
        <taxon>Pasteurellaceae</taxon>
        <taxon>Glaesserella</taxon>
    </lineage>
</organism>
<proteinExistence type="inferred from homology"/>
<comment type="function">
    <text evidence="1">Involved in the biosynthesis of the chorismate, which leads to the biosynthesis of aromatic amino acids. Catalyzes the reversible NADPH linked reduction of 3-dehydroshikimate (DHSA) to yield shikimate (SA).</text>
</comment>
<comment type="catalytic activity">
    <reaction evidence="1">
        <text>shikimate + NADP(+) = 3-dehydroshikimate + NADPH + H(+)</text>
        <dbReference type="Rhea" id="RHEA:17737"/>
        <dbReference type="ChEBI" id="CHEBI:15378"/>
        <dbReference type="ChEBI" id="CHEBI:16630"/>
        <dbReference type="ChEBI" id="CHEBI:36208"/>
        <dbReference type="ChEBI" id="CHEBI:57783"/>
        <dbReference type="ChEBI" id="CHEBI:58349"/>
        <dbReference type="EC" id="1.1.1.25"/>
    </reaction>
</comment>
<comment type="pathway">
    <text evidence="1">Metabolic intermediate biosynthesis; chorismate biosynthesis; chorismate from D-erythrose 4-phosphate and phosphoenolpyruvate: step 4/7.</text>
</comment>
<comment type="subunit">
    <text evidence="1">Homodimer.</text>
</comment>
<comment type="similarity">
    <text evidence="1">Belongs to the shikimate dehydrogenase family.</text>
</comment>
<accession>B8F634</accession>
<feature type="chain" id="PRO_1000124886" description="Shikimate dehydrogenase (NADP(+))">
    <location>
        <begin position="1"/>
        <end position="272"/>
    </location>
</feature>
<feature type="active site" description="Proton acceptor" evidence="1">
    <location>
        <position position="65"/>
    </location>
</feature>
<feature type="binding site" evidence="1">
    <location>
        <begin position="14"/>
        <end position="16"/>
    </location>
    <ligand>
        <name>shikimate</name>
        <dbReference type="ChEBI" id="CHEBI:36208"/>
    </ligand>
</feature>
<feature type="binding site" evidence="1">
    <location>
        <position position="61"/>
    </location>
    <ligand>
        <name>shikimate</name>
        <dbReference type="ChEBI" id="CHEBI:36208"/>
    </ligand>
</feature>
<feature type="binding site" evidence="1">
    <location>
        <position position="77"/>
    </location>
    <ligand>
        <name>NADP(+)</name>
        <dbReference type="ChEBI" id="CHEBI:58349"/>
    </ligand>
</feature>
<feature type="binding site" evidence="1">
    <location>
        <position position="86"/>
    </location>
    <ligand>
        <name>shikimate</name>
        <dbReference type="ChEBI" id="CHEBI:36208"/>
    </ligand>
</feature>
<feature type="binding site" evidence="1">
    <location>
        <position position="102"/>
    </location>
    <ligand>
        <name>shikimate</name>
        <dbReference type="ChEBI" id="CHEBI:36208"/>
    </ligand>
</feature>
<feature type="binding site" evidence="1">
    <location>
        <begin position="126"/>
        <end position="130"/>
    </location>
    <ligand>
        <name>NADP(+)</name>
        <dbReference type="ChEBI" id="CHEBI:58349"/>
    </ligand>
</feature>
<feature type="binding site" evidence="1">
    <location>
        <begin position="149"/>
        <end position="154"/>
    </location>
    <ligand>
        <name>NADP(+)</name>
        <dbReference type="ChEBI" id="CHEBI:58349"/>
    </ligand>
</feature>
<feature type="binding site" evidence="1">
    <location>
        <position position="212"/>
    </location>
    <ligand>
        <name>NADP(+)</name>
        <dbReference type="ChEBI" id="CHEBI:58349"/>
    </ligand>
</feature>
<feature type="binding site" evidence="1">
    <location>
        <position position="214"/>
    </location>
    <ligand>
        <name>shikimate</name>
        <dbReference type="ChEBI" id="CHEBI:36208"/>
    </ligand>
</feature>
<feature type="binding site" evidence="1">
    <location>
        <position position="237"/>
    </location>
    <ligand>
        <name>NADP(+)</name>
        <dbReference type="ChEBI" id="CHEBI:58349"/>
    </ligand>
</feature>
<dbReference type="EC" id="1.1.1.25" evidence="1"/>
<dbReference type="EMBL" id="CP001321">
    <property type="protein sequence ID" value="ACL32786.1"/>
    <property type="molecule type" value="Genomic_DNA"/>
</dbReference>
<dbReference type="RefSeq" id="WP_015939654.1">
    <property type="nucleotide sequence ID" value="NC_011852.1"/>
</dbReference>
<dbReference type="SMR" id="B8F634"/>
<dbReference type="STRING" id="557723.HAPS_1181"/>
<dbReference type="KEGG" id="hap:HAPS_1181"/>
<dbReference type="PATRIC" id="fig|557723.8.peg.1173"/>
<dbReference type="HOGENOM" id="CLU_044063_2_1_6"/>
<dbReference type="UniPathway" id="UPA00053">
    <property type="reaction ID" value="UER00087"/>
</dbReference>
<dbReference type="Proteomes" id="UP000006743">
    <property type="component" value="Chromosome"/>
</dbReference>
<dbReference type="GO" id="GO:0005829">
    <property type="term" value="C:cytosol"/>
    <property type="evidence" value="ECO:0007669"/>
    <property type="project" value="TreeGrafter"/>
</dbReference>
<dbReference type="GO" id="GO:0050661">
    <property type="term" value="F:NADP binding"/>
    <property type="evidence" value="ECO:0007669"/>
    <property type="project" value="InterPro"/>
</dbReference>
<dbReference type="GO" id="GO:0004764">
    <property type="term" value="F:shikimate 3-dehydrogenase (NADP+) activity"/>
    <property type="evidence" value="ECO:0007669"/>
    <property type="project" value="UniProtKB-UniRule"/>
</dbReference>
<dbReference type="GO" id="GO:0008652">
    <property type="term" value="P:amino acid biosynthetic process"/>
    <property type="evidence" value="ECO:0007669"/>
    <property type="project" value="UniProtKB-KW"/>
</dbReference>
<dbReference type="GO" id="GO:0009073">
    <property type="term" value="P:aromatic amino acid family biosynthetic process"/>
    <property type="evidence" value="ECO:0007669"/>
    <property type="project" value="UniProtKB-KW"/>
</dbReference>
<dbReference type="GO" id="GO:0009423">
    <property type="term" value="P:chorismate biosynthetic process"/>
    <property type="evidence" value="ECO:0007669"/>
    <property type="project" value="UniProtKB-UniRule"/>
</dbReference>
<dbReference type="GO" id="GO:0019632">
    <property type="term" value="P:shikimate metabolic process"/>
    <property type="evidence" value="ECO:0007669"/>
    <property type="project" value="InterPro"/>
</dbReference>
<dbReference type="CDD" id="cd01065">
    <property type="entry name" value="NAD_bind_Shikimate_DH"/>
    <property type="match status" value="1"/>
</dbReference>
<dbReference type="FunFam" id="3.40.50.10860:FF:000006">
    <property type="entry name" value="Shikimate dehydrogenase (NADP(+))"/>
    <property type="match status" value="1"/>
</dbReference>
<dbReference type="Gene3D" id="3.40.50.10860">
    <property type="entry name" value="Leucine Dehydrogenase, chain A, domain 1"/>
    <property type="match status" value="1"/>
</dbReference>
<dbReference type="Gene3D" id="3.40.50.720">
    <property type="entry name" value="NAD(P)-binding Rossmann-like Domain"/>
    <property type="match status" value="1"/>
</dbReference>
<dbReference type="HAMAP" id="MF_00222">
    <property type="entry name" value="Shikimate_DH_AroE"/>
    <property type="match status" value="1"/>
</dbReference>
<dbReference type="InterPro" id="IPR046346">
    <property type="entry name" value="Aminoacid_DH-like_N_sf"/>
</dbReference>
<dbReference type="InterPro" id="IPR036291">
    <property type="entry name" value="NAD(P)-bd_dom_sf"/>
</dbReference>
<dbReference type="InterPro" id="IPR041121">
    <property type="entry name" value="SDH_C"/>
</dbReference>
<dbReference type="InterPro" id="IPR011342">
    <property type="entry name" value="Shikimate_DH"/>
</dbReference>
<dbReference type="InterPro" id="IPR013708">
    <property type="entry name" value="Shikimate_DH-bd_N"/>
</dbReference>
<dbReference type="InterPro" id="IPR022893">
    <property type="entry name" value="Shikimate_DH_fam"/>
</dbReference>
<dbReference type="InterPro" id="IPR006151">
    <property type="entry name" value="Shikm_DH/Glu-tRNA_Rdtase"/>
</dbReference>
<dbReference type="NCBIfam" id="TIGR00507">
    <property type="entry name" value="aroE"/>
    <property type="match status" value="1"/>
</dbReference>
<dbReference type="NCBIfam" id="NF001310">
    <property type="entry name" value="PRK00258.1-2"/>
    <property type="match status" value="1"/>
</dbReference>
<dbReference type="PANTHER" id="PTHR21089:SF1">
    <property type="entry name" value="BIFUNCTIONAL 3-DEHYDROQUINATE DEHYDRATASE_SHIKIMATE DEHYDROGENASE, CHLOROPLASTIC"/>
    <property type="match status" value="1"/>
</dbReference>
<dbReference type="PANTHER" id="PTHR21089">
    <property type="entry name" value="SHIKIMATE DEHYDROGENASE"/>
    <property type="match status" value="1"/>
</dbReference>
<dbReference type="Pfam" id="PF18317">
    <property type="entry name" value="SDH_C"/>
    <property type="match status" value="1"/>
</dbReference>
<dbReference type="Pfam" id="PF01488">
    <property type="entry name" value="Shikimate_DH"/>
    <property type="match status" value="1"/>
</dbReference>
<dbReference type="Pfam" id="PF08501">
    <property type="entry name" value="Shikimate_dh_N"/>
    <property type="match status" value="1"/>
</dbReference>
<dbReference type="SUPFAM" id="SSF53223">
    <property type="entry name" value="Aminoacid dehydrogenase-like, N-terminal domain"/>
    <property type="match status" value="1"/>
</dbReference>
<dbReference type="SUPFAM" id="SSF51735">
    <property type="entry name" value="NAD(P)-binding Rossmann-fold domains"/>
    <property type="match status" value="1"/>
</dbReference>
<name>AROE_GLAP5</name>
<keyword id="KW-0028">Amino-acid biosynthesis</keyword>
<keyword id="KW-0057">Aromatic amino acid biosynthesis</keyword>
<keyword id="KW-0521">NADP</keyword>
<keyword id="KW-0560">Oxidoreductase</keyword>
<keyword id="KW-1185">Reference proteome</keyword>
<reference key="1">
    <citation type="journal article" date="2009" name="J. Bacteriol.">
        <title>Complete genome sequence of Haemophilus parasuis SH0165.</title>
        <authorList>
            <person name="Yue M."/>
            <person name="Yang F."/>
            <person name="Yang J."/>
            <person name="Bei W."/>
            <person name="Cai X."/>
            <person name="Chen L."/>
            <person name="Dong J."/>
            <person name="Zhou R."/>
            <person name="Jin M."/>
            <person name="Jin Q."/>
            <person name="Chen H."/>
        </authorList>
    </citation>
    <scope>NUCLEOTIDE SEQUENCE [LARGE SCALE GENOMIC DNA]</scope>
    <source>
        <strain>SH0165</strain>
    </source>
</reference>
<gene>
    <name evidence="1" type="primary">aroE</name>
    <name type="ordered locus">HAPS_1181</name>
</gene>
<sequence>MNQYAVWGNPIAQSKSPRIHTLFGQQTGKAISYVAKLGDEQQFEQQLKQFFAEGAKGANITAPFKERAFALADLYSESCLQAEACNTLKRLDDGRLYADNTDGVGLVSDLARLGWPKPHQRILILGAGGATKGVLYPLLQAQQQITIYNRTADKAASLAKKFAKFGQIQSACFDELPEQSFDLIINATSLGLQGKCVELPARLLTQANIYDMQYAPNMQTPFLEYARSQGATQYQDGLGMLVGQAAYTFQLWEDVLPDVEPILKQIKQEMEF</sequence>
<evidence type="ECO:0000255" key="1">
    <source>
        <dbReference type="HAMAP-Rule" id="MF_00222"/>
    </source>
</evidence>
<protein>
    <recommendedName>
        <fullName evidence="1">Shikimate dehydrogenase (NADP(+))</fullName>
        <shortName evidence="1">SDH</shortName>
        <ecNumber evidence="1">1.1.1.25</ecNumber>
    </recommendedName>
</protein>